<accession>B5R3I3</accession>
<comment type="function">
    <text evidence="1">Associates with the EF-Tu.GDP complex and induces the exchange of GDP to GTP. It remains bound to the aminoacyl-tRNA.EF-Tu.GTP complex up to the GTP hydrolysis stage on the ribosome.</text>
</comment>
<comment type="subcellular location">
    <subcellularLocation>
        <location evidence="1">Cytoplasm</location>
    </subcellularLocation>
</comment>
<comment type="similarity">
    <text evidence="1">Belongs to the EF-Ts family.</text>
</comment>
<dbReference type="EMBL" id="AM933172">
    <property type="protein sequence ID" value="CAR31812.1"/>
    <property type="molecule type" value="Genomic_DNA"/>
</dbReference>
<dbReference type="RefSeq" id="WP_000808106.1">
    <property type="nucleotide sequence ID" value="NC_011294.1"/>
</dbReference>
<dbReference type="SMR" id="B5R3I3"/>
<dbReference type="KEGG" id="set:SEN0224"/>
<dbReference type="HOGENOM" id="CLU_047155_0_2_6"/>
<dbReference type="Proteomes" id="UP000000613">
    <property type="component" value="Chromosome"/>
</dbReference>
<dbReference type="GO" id="GO:0005737">
    <property type="term" value="C:cytoplasm"/>
    <property type="evidence" value="ECO:0007669"/>
    <property type="project" value="UniProtKB-SubCell"/>
</dbReference>
<dbReference type="GO" id="GO:0003746">
    <property type="term" value="F:translation elongation factor activity"/>
    <property type="evidence" value="ECO:0007669"/>
    <property type="project" value="UniProtKB-UniRule"/>
</dbReference>
<dbReference type="CDD" id="cd14275">
    <property type="entry name" value="UBA_EF-Ts"/>
    <property type="match status" value="1"/>
</dbReference>
<dbReference type="FunFam" id="1.10.286.20:FF:000001">
    <property type="entry name" value="Elongation factor Ts"/>
    <property type="match status" value="1"/>
</dbReference>
<dbReference type="FunFam" id="1.10.8.10:FF:000001">
    <property type="entry name" value="Elongation factor Ts"/>
    <property type="match status" value="1"/>
</dbReference>
<dbReference type="FunFam" id="3.30.479.20:FF:000001">
    <property type="entry name" value="Elongation factor Ts"/>
    <property type="match status" value="1"/>
</dbReference>
<dbReference type="Gene3D" id="1.10.286.20">
    <property type="match status" value="1"/>
</dbReference>
<dbReference type="Gene3D" id="1.10.8.10">
    <property type="entry name" value="DNA helicase RuvA subunit, C-terminal domain"/>
    <property type="match status" value="1"/>
</dbReference>
<dbReference type="Gene3D" id="3.30.479.20">
    <property type="entry name" value="Elongation factor Ts, dimerisation domain"/>
    <property type="match status" value="2"/>
</dbReference>
<dbReference type="HAMAP" id="MF_00050">
    <property type="entry name" value="EF_Ts"/>
    <property type="match status" value="1"/>
</dbReference>
<dbReference type="InterPro" id="IPR036402">
    <property type="entry name" value="EF-Ts_dimer_sf"/>
</dbReference>
<dbReference type="InterPro" id="IPR001816">
    <property type="entry name" value="Transl_elong_EFTs/EF1B"/>
</dbReference>
<dbReference type="InterPro" id="IPR014039">
    <property type="entry name" value="Transl_elong_EFTs/EF1B_dimer"/>
</dbReference>
<dbReference type="InterPro" id="IPR018101">
    <property type="entry name" value="Transl_elong_Ts_CS"/>
</dbReference>
<dbReference type="InterPro" id="IPR009060">
    <property type="entry name" value="UBA-like_sf"/>
</dbReference>
<dbReference type="NCBIfam" id="TIGR00116">
    <property type="entry name" value="tsf"/>
    <property type="match status" value="1"/>
</dbReference>
<dbReference type="PANTHER" id="PTHR11741">
    <property type="entry name" value="ELONGATION FACTOR TS"/>
    <property type="match status" value="1"/>
</dbReference>
<dbReference type="PANTHER" id="PTHR11741:SF0">
    <property type="entry name" value="ELONGATION FACTOR TS, MITOCHONDRIAL"/>
    <property type="match status" value="1"/>
</dbReference>
<dbReference type="Pfam" id="PF00889">
    <property type="entry name" value="EF_TS"/>
    <property type="match status" value="1"/>
</dbReference>
<dbReference type="SUPFAM" id="SSF54713">
    <property type="entry name" value="Elongation factor Ts (EF-Ts), dimerisation domain"/>
    <property type="match status" value="2"/>
</dbReference>
<dbReference type="SUPFAM" id="SSF46934">
    <property type="entry name" value="UBA-like"/>
    <property type="match status" value="1"/>
</dbReference>
<dbReference type="PROSITE" id="PS01126">
    <property type="entry name" value="EF_TS_1"/>
    <property type="match status" value="1"/>
</dbReference>
<dbReference type="PROSITE" id="PS01127">
    <property type="entry name" value="EF_TS_2"/>
    <property type="match status" value="1"/>
</dbReference>
<protein>
    <recommendedName>
        <fullName evidence="1">Elongation factor Ts</fullName>
        <shortName evidence="1">EF-Ts</shortName>
    </recommendedName>
</protein>
<gene>
    <name evidence="1" type="primary">tsf</name>
    <name type="ordered locus">SEN0224</name>
</gene>
<name>EFTS_SALEP</name>
<proteinExistence type="inferred from homology"/>
<keyword id="KW-0963">Cytoplasm</keyword>
<keyword id="KW-0251">Elongation factor</keyword>
<keyword id="KW-0648">Protein biosynthesis</keyword>
<sequence length="283" mass="30358">MAEITASLVKELRERTGAGMMDCKKALTEANGDIELAIENMRKSGAIKAAKKAGNVAADGVIKTKIDGNVAFILEVNCQTDFVAKDAGFQAFADKVLDAAVAGKITDVEVLKAQFEEERVALVAKIGENINIRRVASLEGDVLGSYQHGARIGVLVAAKGADEELVKQLAMHVAASKPEFVKPEDVSADVVEKEYQVQLDIAMQSGKPKEIAEKMVEGRMKKFTGEVSLTGQPFVMEPSKSVGQLLKEHNADVTGFIRFEVGEGIEKVETDFAAEVAAMSKQS</sequence>
<evidence type="ECO:0000255" key="1">
    <source>
        <dbReference type="HAMAP-Rule" id="MF_00050"/>
    </source>
</evidence>
<reference key="1">
    <citation type="journal article" date="2008" name="Genome Res.">
        <title>Comparative genome analysis of Salmonella enteritidis PT4 and Salmonella gallinarum 287/91 provides insights into evolutionary and host adaptation pathways.</title>
        <authorList>
            <person name="Thomson N.R."/>
            <person name="Clayton D.J."/>
            <person name="Windhorst D."/>
            <person name="Vernikos G."/>
            <person name="Davidson S."/>
            <person name="Churcher C."/>
            <person name="Quail M.A."/>
            <person name="Stevens M."/>
            <person name="Jones M.A."/>
            <person name="Watson M."/>
            <person name="Barron A."/>
            <person name="Layton A."/>
            <person name="Pickard D."/>
            <person name="Kingsley R.A."/>
            <person name="Bignell A."/>
            <person name="Clark L."/>
            <person name="Harris B."/>
            <person name="Ormond D."/>
            <person name="Abdellah Z."/>
            <person name="Brooks K."/>
            <person name="Cherevach I."/>
            <person name="Chillingworth T."/>
            <person name="Woodward J."/>
            <person name="Norberczak H."/>
            <person name="Lord A."/>
            <person name="Arrowsmith C."/>
            <person name="Jagels K."/>
            <person name="Moule S."/>
            <person name="Mungall K."/>
            <person name="Saunders M."/>
            <person name="Whitehead S."/>
            <person name="Chabalgoity J.A."/>
            <person name="Maskell D."/>
            <person name="Humphreys T."/>
            <person name="Roberts M."/>
            <person name="Barrow P.A."/>
            <person name="Dougan G."/>
            <person name="Parkhill J."/>
        </authorList>
    </citation>
    <scope>NUCLEOTIDE SEQUENCE [LARGE SCALE GENOMIC DNA]</scope>
    <source>
        <strain>P125109</strain>
    </source>
</reference>
<organism>
    <name type="scientific">Salmonella enteritidis PT4 (strain P125109)</name>
    <dbReference type="NCBI Taxonomy" id="550537"/>
    <lineage>
        <taxon>Bacteria</taxon>
        <taxon>Pseudomonadati</taxon>
        <taxon>Pseudomonadota</taxon>
        <taxon>Gammaproteobacteria</taxon>
        <taxon>Enterobacterales</taxon>
        <taxon>Enterobacteriaceae</taxon>
        <taxon>Salmonella</taxon>
    </lineage>
</organism>
<feature type="chain" id="PRO_1000116783" description="Elongation factor Ts">
    <location>
        <begin position="1"/>
        <end position="283"/>
    </location>
</feature>
<feature type="region of interest" description="Involved in Mg(2+) ion dislocation from EF-Tu" evidence="1">
    <location>
        <begin position="80"/>
        <end position="83"/>
    </location>
</feature>